<feature type="chain" id="PRO_1000090209" description="DNA-directed RNA polymerase subunit Rpo5">
    <location>
        <begin position="1"/>
        <end position="78"/>
    </location>
</feature>
<sequence>MKVSSHEMVPTHEIIPREEIPLLLEKYNIKLQQLPKLLDTDPLVLETEATPGDVLKITRMSPTAGESTYYRLVIATSL</sequence>
<keyword id="KW-0963">Cytoplasm</keyword>
<keyword id="KW-0240">DNA-directed RNA polymerase</keyword>
<keyword id="KW-0548">Nucleotidyltransferase</keyword>
<keyword id="KW-0804">Transcription</keyword>
<keyword id="KW-0808">Transferase</keyword>
<protein>
    <recommendedName>
        <fullName evidence="1">DNA-directed RNA polymerase subunit Rpo5</fullName>
        <ecNumber evidence="1">2.7.7.6</ecNumber>
    </recommendedName>
    <alternativeName>
        <fullName evidence="1">DNA-directed RNA polymerase subunit H</fullName>
    </alternativeName>
</protein>
<organism>
    <name type="scientific">Methanococcus maripaludis (strain C6 / ATCC BAA-1332)</name>
    <dbReference type="NCBI Taxonomy" id="444158"/>
    <lineage>
        <taxon>Archaea</taxon>
        <taxon>Methanobacteriati</taxon>
        <taxon>Methanobacteriota</taxon>
        <taxon>Methanomada group</taxon>
        <taxon>Methanococci</taxon>
        <taxon>Methanococcales</taxon>
        <taxon>Methanococcaceae</taxon>
        <taxon>Methanococcus</taxon>
    </lineage>
</organism>
<comment type="function">
    <text evidence="1">DNA-dependent RNA polymerase (RNAP) catalyzes the transcription of DNA into RNA using the four ribonucleoside triphosphates as substrates.</text>
</comment>
<comment type="catalytic activity">
    <reaction evidence="1">
        <text>RNA(n) + a ribonucleoside 5'-triphosphate = RNA(n+1) + diphosphate</text>
        <dbReference type="Rhea" id="RHEA:21248"/>
        <dbReference type="Rhea" id="RHEA-COMP:14527"/>
        <dbReference type="Rhea" id="RHEA-COMP:17342"/>
        <dbReference type="ChEBI" id="CHEBI:33019"/>
        <dbReference type="ChEBI" id="CHEBI:61557"/>
        <dbReference type="ChEBI" id="CHEBI:140395"/>
        <dbReference type="EC" id="2.7.7.6"/>
    </reaction>
</comment>
<comment type="subunit">
    <text evidence="1">Part of the RNA polymerase complex.</text>
</comment>
<comment type="subcellular location">
    <subcellularLocation>
        <location evidence="1">Cytoplasm</location>
    </subcellularLocation>
</comment>
<comment type="similarity">
    <text evidence="1">Belongs to the archaeal Rpo5/eukaryotic RPB5 RNA polymerase subunit family.</text>
</comment>
<proteinExistence type="inferred from homology"/>
<evidence type="ECO:0000255" key="1">
    <source>
        <dbReference type="HAMAP-Rule" id="MF_00025"/>
    </source>
</evidence>
<gene>
    <name evidence="1" type="primary">rpo5</name>
    <name evidence="1" type="synonym">rpoH</name>
    <name type="ordered locus">MmarC6_1313</name>
</gene>
<reference key="1">
    <citation type="submission" date="2007-10" db="EMBL/GenBank/DDBJ databases">
        <title>Complete sequence of Methanococcus maripaludis C6.</title>
        <authorList>
            <consortium name="US DOE Joint Genome Institute"/>
            <person name="Copeland A."/>
            <person name="Lucas S."/>
            <person name="Lapidus A."/>
            <person name="Barry K."/>
            <person name="Glavina del Rio T."/>
            <person name="Dalin E."/>
            <person name="Tice H."/>
            <person name="Pitluck S."/>
            <person name="Clum A."/>
            <person name="Schmutz J."/>
            <person name="Larimer F."/>
            <person name="Land M."/>
            <person name="Hauser L."/>
            <person name="Kyrpides N."/>
            <person name="Mikhailova N."/>
            <person name="Sieprawska-Lupa M."/>
            <person name="Whitman W.B."/>
            <person name="Richardson P."/>
        </authorList>
    </citation>
    <scope>NUCLEOTIDE SEQUENCE [LARGE SCALE GENOMIC DNA]</scope>
    <source>
        <strain>C6 / ATCC BAA-1332</strain>
    </source>
</reference>
<name>RPO5_METM6</name>
<accession>A9A9V3</accession>
<dbReference type="EC" id="2.7.7.6" evidence="1"/>
<dbReference type="EMBL" id="CP000867">
    <property type="protein sequence ID" value="ABX02126.1"/>
    <property type="molecule type" value="Genomic_DNA"/>
</dbReference>
<dbReference type="SMR" id="A9A9V3"/>
<dbReference type="STRING" id="444158.MmarC6_1313"/>
<dbReference type="KEGG" id="mmx:MmarC6_1313"/>
<dbReference type="eggNOG" id="arCOG04258">
    <property type="taxonomic scope" value="Archaea"/>
</dbReference>
<dbReference type="HOGENOM" id="CLU_058320_4_0_2"/>
<dbReference type="OrthoDB" id="30537at2157"/>
<dbReference type="PhylomeDB" id="A9A9V3"/>
<dbReference type="GO" id="GO:0005737">
    <property type="term" value="C:cytoplasm"/>
    <property type="evidence" value="ECO:0007669"/>
    <property type="project" value="UniProtKB-SubCell"/>
</dbReference>
<dbReference type="GO" id="GO:0000428">
    <property type="term" value="C:DNA-directed RNA polymerase complex"/>
    <property type="evidence" value="ECO:0007669"/>
    <property type="project" value="UniProtKB-KW"/>
</dbReference>
<dbReference type="GO" id="GO:0003677">
    <property type="term" value="F:DNA binding"/>
    <property type="evidence" value="ECO:0007669"/>
    <property type="project" value="InterPro"/>
</dbReference>
<dbReference type="GO" id="GO:0003899">
    <property type="term" value="F:DNA-directed RNA polymerase activity"/>
    <property type="evidence" value="ECO:0007669"/>
    <property type="project" value="UniProtKB-UniRule"/>
</dbReference>
<dbReference type="GO" id="GO:0006366">
    <property type="term" value="P:transcription by RNA polymerase II"/>
    <property type="evidence" value="ECO:0007669"/>
    <property type="project" value="TreeGrafter"/>
</dbReference>
<dbReference type="GO" id="GO:0006362">
    <property type="term" value="P:transcription elongation by RNA polymerase I"/>
    <property type="evidence" value="ECO:0007669"/>
    <property type="project" value="TreeGrafter"/>
</dbReference>
<dbReference type="GO" id="GO:0042797">
    <property type="term" value="P:tRNA transcription by RNA polymerase III"/>
    <property type="evidence" value="ECO:0007669"/>
    <property type="project" value="TreeGrafter"/>
</dbReference>
<dbReference type="Gene3D" id="3.90.940.20">
    <property type="entry name" value="RPB5-like RNA polymerase subunit"/>
    <property type="match status" value="1"/>
</dbReference>
<dbReference type="HAMAP" id="MF_00025">
    <property type="entry name" value="RNApol_Rpo5_RPB5"/>
    <property type="match status" value="1"/>
</dbReference>
<dbReference type="InterPro" id="IPR014381">
    <property type="entry name" value="Arch_Rpo5/euc_Rpb5"/>
</dbReference>
<dbReference type="InterPro" id="IPR000783">
    <property type="entry name" value="RNA_pol_subH/Rpb5_C"/>
</dbReference>
<dbReference type="InterPro" id="IPR020608">
    <property type="entry name" value="RNA_pol_subH/Rpb5_CS"/>
</dbReference>
<dbReference type="InterPro" id="IPR035913">
    <property type="entry name" value="RPB5-like_sf"/>
</dbReference>
<dbReference type="NCBIfam" id="NF007129">
    <property type="entry name" value="PRK09570.1"/>
    <property type="match status" value="1"/>
</dbReference>
<dbReference type="PANTHER" id="PTHR10535">
    <property type="entry name" value="DNA-DIRECTED RNA POLYMERASES I, II, AND III SUBUNIT RPABC1"/>
    <property type="match status" value="1"/>
</dbReference>
<dbReference type="PANTHER" id="PTHR10535:SF0">
    <property type="entry name" value="DNA-DIRECTED RNA POLYMERASES I, II, AND III SUBUNIT RPABC1"/>
    <property type="match status" value="1"/>
</dbReference>
<dbReference type="Pfam" id="PF01191">
    <property type="entry name" value="RNA_pol_Rpb5_C"/>
    <property type="match status" value="1"/>
</dbReference>
<dbReference type="SUPFAM" id="SSF55287">
    <property type="entry name" value="RPB5-like RNA polymerase subunit"/>
    <property type="match status" value="1"/>
</dbReference>
<dbReference type="PROSITE" id="PS01110">
    <property type="entry name" value="RNA_POL_H_23KD"/>
    <property type="match status" value="1"/>
</dbReference>